<evidence type="ECO:0000255" key="1">
    <source>
        <dbReference type="HAMAP-Rule" id="MF_00842"/>
    </source>
</evidence>
<evidence type="ECO:0000269" key="2">
    <source>
    </source>
</evidence>
<evidence type="ECO:0000305" key="3"/>
<reference key="1">
    <citation type="journal article" date="2004" name="Proc. Natl. Acad. Sci. U.S.A.">
        <title>Insights into the evolution of Yersinia pestis through whole-genome comparison with Yersinia pseudotuberculosis.</title>
        <authorList>
            <person name="Chain P.S.G."/>
            <person name="Carniel E."/>
            <person name="Larimer F.W."/>
            <person name="Lamerdin J."/>
            <person name="Stoutland P.O."/>
            <person name="Regala W.M."/>
            <person name="Georgescu A.M."/>
            <person name="Vergez L.M."/>
            <person name="Land M.L."/>
            <person name="Motin V.L."/>
            <person name="Brubaker R.R."/>
            <person name="Fowler J."/>
            <person name="Hinnebusch J."/>
            <person name="Marceau M."/>
            <person name="Medigue C."/>
            <person name="Simonet M."/>
            <person name="Chenal-Francisque V."/>
            <person name="Souza B."/>
            <person name="Dacheux D."/>
            <person name="Elliott J.M."/>
            <person name="Derbise A."/>
            <person name="Hauser L.J."/>
            <person name="Garcia E."/>
        </authorList>
    </citation>
    <scope>NUCLEOTIDE SEQUENCE [LARGE SCALE GENOMIC DNA]</scope>
    <source>
        <strain>IP32953</strain>
    </source>
</reference>
<reference key="2">
    <citation type="journal article" date="1989" name="J. Immunol.">
        <title>The bacterial outer membrane protein that reacts with anti-HLA-B27 antibodies is the OmpA protein.</title>
        <authorList>
            <person name="Zhang J.J."/>
            <person name="Hamachi M."/>
            <person name="Hamachi T."/>
            <person name="Zhao Y.P."/>
            <person name="Yu D.T.Y."/>
        </authorList>
    </citation>
    <scope>PROTEIN SEQUENCE OF 22-50</scope>
</reference>
<name>OMPA_YERPS</name>
<dbReference type="EMBL" id="BX936398">
    <property type="protein sequence ID" value="CAH20693.1"/>
    <property type="molecule type" value="Genomic_DNA"/>
</dbReference>
<dbReference type="PIR" id="A60752">
    <property type="entry name" value="A60752"/>
</dbReference>
<dbReference type="RefSeq" id="WP_002213066.1">
    <property type="nucleotide sequence ID" value="NZ_CP009712.1"/>
</dbReference>
<dbReference type="SMR" id="P38399"/>
<dbReference type="GeneID" id="96665030"/>
<dbReference type="KEGG" id="ypo:BZ17_1065"/>
<dbReference type="KEGG" id="yps:YPTB1453"/>
<dbReference type="PATRIC" id="fig|273123.14.peg.1130"/>
<dbReference type="Proteomes" id="UP000001011">
    <property type="component" value="Chromosome"/>
</dbReference>
<dbReference type="GO" id="GO:0009279">
    <property type="term" value="C:cell outer membrane"/>
    <property type="evidence" value="ECO:0007669"/>
    <property type="project" value="UniProtKB-SubCell"/>
</dbReference>
<dbReference type="GO" id="GO:0046930">
    <property type="term" value="C:pore complex"/>
    <property type="evidence" value="ECO:0007669"/>
    <property type="project" value="UniProtKB-KW"/>
</dbReference>
<dbReference type="GO" id="GO:0015288">
    <property type="term" value="F:porin activity"/>
    <property type="evidence" value="ECO:0007669"/>
    <property type="project" value="UniProtKB-UniRule"/>
</dbReference>
<dbReference type="GO" id="GO:0034220">
    <property type="term" value="P:monoatomic ion transmembrane transport"/>
    <property type="evidence" value="ECO:0007669"/>
    <property type="project" value="UniProtKB-UniRule"/>
</dbReference>
<dbReference type="CDD" id="cd07185">
    <property type="entry name" value="OmpA_C-like"/>
    <property type="match status" value="1"/>
</dbReference>
<dbReference type="FunFam" id="2.40.160.20:FF:000003">
    <property type="entry name" value="Outer membrane protein A"/>
    <property type="match status" value="1"/>
</dbReference>
<dbReference type="FunFam" id="3.30.1330.60:FF:000004">
    <property type="entry name" value="Outer membrane protein A"/>
    <property type="match status" value="1"/>
</dbReference>
<dbReference type="Gene3D" id="2.40.160.20">
    <property type="match status" value="1"/>
</dbReference>
<dbReference type="Gene3D" id="3.30.1330.60">
    <property type="entry name" value="OmpA-like domain"/>
    <property type="match status" value="1"/>
</dbReference>
<dbReference type="HAMAP" id="MF_00842">
    <property type="entry name" value="OmpA"/>
    <property type="match status" value="1"/>
</dbReference>
<dbReference type="InterPro" id="IPR050330">
    <property type="entry name" value="Bact_OuterMem_StrucFunc"/>
</dbReference>
<dbReference type="InterPro" id="IPR011250">
    <property type="entry name" value="OMP/PagP_b-brl"/>
</dbReference>
<dbReference type="InterPro" id="IPR006664">
    <property type="entry name" value="OMP_bac"/>
</dbReference>
<dbReference type="InterPro" id="IPR002368">
    <property type="entry name" value="OmpA"/>
</dbReference>
<dbReference type="InterPro" id="IPR006665">
    <property type="entry name" value="OmpA-like"/>
</dbReference>
<dbReference type="InterPro" id="IPR006690">
    <property type="entry name" value="OMPA-like_CS"/>
</dbReference>
<dbReference type="InterPro" id="IPR036737">
    <property type="entry name" value="OmpA-like_sf"/>
</dbReference>
<dbReference type="InterPro" id="IPR000498">
    <property type="entry name" value="OmpA-like_TM_dom"/>
</dbReference>
<dbReference type="NCBIfam" id="NF008071">
    <property type="entry name" value="PRK10808.1"/>
    <property type="match status" value="1"/>
</dbReference>
<dbReference type="PANTHER" id="PTHR30329:SF21">
    <property type="entry name" value="LIPOPROTEIN YIAD-RELATED"/>
    <property type="match status" value="1"/>
</dbReference>
<dbReference type="PANTHER" id="PTHR30329">
    <property type="entry name" value="STATOR ELEMENT OF FLAGELLAR MOTOR COMPLEX"/>
    <property type="match status" value="1"/>
</dbReference>
<dbReference type="Pfam" id="PF00691">
    <property type="entry name" value="OmpA"/>
    <property type="match status" value="1"/>
</dbReference>
<dbReference type="Pfam" id="PF01389">
    <property type="entry name" value="OmpA_membrane"/>
    <property type="match status" value="1"/>
</dbReference>
<dbReference type="PRINTS" id="PR01021">
    <property type="entry name" value="OMPADOMAIN"/>
</dbReference>
<dbReference type="PRINTS" id="PR01022">
    <property type="entry name" value="OUTRMMBRANEA"/>
</dbReference>
<dbReference type="SUPFAM" id="SSF56925">
    <property type="entry name" value="OMPA-like"/>
    <property type="match status" value="1"/>
</dbReference>
<dbReference type="SUPFAM" id="SSF103088">
    <property type="entry name" value="OmpA-like"/>
    <property type="match status" value="1"/>
</dbReference>
<dbReference type="PROSITE" id="PS01068">
    <property type="entry name" value="OMPA_1"/>
    <property type="match status" value="1"/>
</dbReference>
<dbReference type="PROSITE" id="PS51123">
    <property type="entry name" value="OMPA_2"/>
    <property type="match status" value="1"/>
</dbReference>
<accession>P38399</accession>
<accession>Q66CF0</accession>
<organism>
    <name type="scientific">Yersinia pseudotuberculosis serotype I (strain IP32953)</name>
    <dbReference type="NCBI Taxonomy" id="273123"/>
    <lineage>
        <taxon>Bacteria</taxon>
        <taxon>Pseudomonadati</taxon>
        <taxon>Pseudomonadota</taxon>
        <taxon>Gammaproteobacteria</taxon>
        <taxon>Enterobacterales</taxon>
        <taxon>Yersiniaceae</taxon>
        <taxon>Yersinia</taxon>
    </lineage>
</organism>
<gene>
    <name evidence="1" type="primary">ompA</name>
    <name type="ordered locus">YPTB1453</name>
</gene>
<proteinExistence type="evidence at protein level"/>
<protein>
    <recommendedName>
        <fullName evidence="1">Outer membrane protein A</fullName>
    </recommendedName>
    <alternativeName>
        <fullName evidence="1">Outer membrane porin A</fullName>
    </alternativeName>
</protein>
<comment type="function">
    <text evidence="1">With TolR probably plays a role in maintaining the position of the peptidoglycan cell wall in the periplasm. Acts as a porin with low permeability that allows slow penetration of small solutes; an internal gate slows down solute passage.</text>
</comment>
<comment type="subunit">
    <text evidence="1">Monomer and homodimer.</text>
</comment>
<comment type="subcellular location">
    <subcellularLocation>
        <location evidence="1">Cell outer membrane</location>
        <topology evidence="1">Multi-pass membrane protein</topology>
    </subcellularLocation>
</comment>
<comment type="domain">
    <text evidence="1">The extracellular loops are most variable in sequence, and in some bacteria confer sensitivity to phage and/or colicins.</text>
</comment>
<comment type="similarity">
    <text evidence="1">Belongs to the outer membrane OOP (TC 1.B.6) superfamily. OmpA family.</text>
</comment>
<sequence>MKKTAIALAVALVGFATVAQAAPKDNTWYTGGKLGWSQYQDTGSIINNDGPTHKDQLGAGAFFGYQANQYLGFEMGYDWLGRMPYKGDINNGAFKAQGVQLAAKLSYPVAQDLDVYTRLGGLVWRADAKGSFDGGLDRASGHDTGVSPLVALGAEYAWTKNWATRMEYQWVNNIGDRETVGARPDNGLLSVGVSYRFGQEDAAAPIVAPTPAPAPIVDTKRFTLKSDVLFGFNKANLKPEGQQALDQLYAQLSSIDPKDGSVVVLGFADRIGQPAPNLALSQRRADSVRDYLVSKGIPADKITARGEGQANPVTGNTCDNVKPRAALIECLAPDRRVEIEVKGYKEVVTQPQA</sequence>
<keyword id="KW-0998">Cell outer membrane</keyword>
<keyword id="KW-0903">Direct protein sequencing</keyword>
<keyword id="KW-1015">Disulfide bond</keyword>
<keyword id="KW-0406">Ion transport</keyword>
<keyword id="KW-0472">Membrane</keyword>
<keyword id="KW-0626">Porin</keyword>
<keyword id="KW-0677">Repeat</keyword>
<keyword id="KW-0732">Signal</keyword>
<keyword id="KW-0812">Transmembrane</keyword>
<keyword id="KW-1134">Transmembrane beta strand</keyword>
<keyword id="KW-0813">Transport</keyword>
<feature type="signal peptide" evidence="1 2">
    <location>
        <begin position="1"/>
        <end position="21"/>
    </location>
</feature>
<feature type="chain" id="PRO_0000020103" description="Outer membrane protein A" evidence="1">
    <location>
        <begin position="22"/>
        <end position="353"/>
    </location>
</feature>
<feature type="transmembrane region" description="Beta stranded" evidence="1">
    <location>
        <begin position="27"/>
        <end position="37"/>
    </location>
</feature>
<feature type="transmembrane region" description="Beta stranded" evidence="1">
    <location>
        <begin position="56"/>
        <end position="67"/>
    </location>
</feature>
<feature type="transmembrane region" description="Beta stranded" evidence="1">
    <location>
        <begin position="71"/>
        <end position="79"/>
    </location>
</feature>
<feature type="transmembrane region" description="Beta stranded" evidence="1">
    <location>
        <begin position="97"/>
        <end position="108"/>
    </location>
</feature>
<feature type="transmembrane region" description="Beta stranded" evidence="1">
    <location>
        <begin position="113"/>
        <end position="121"/>
    </location>
</feature>
<feature type="transmembrane region" description="Beta stranded" evidence="1">
    <location>
        <begin position="148"/>
        <end position="157"/>
    </location>
</feature>
<feature type="transmembrane region" description="Beta stranded" evidence="1">
    <location>
        <begin position="162"/>
        <end position="169"/>
    </location>
</feature>
<feature type="transmembrane region" description="Beta stranded" evidence="1">
    <location>
        <begin position="188"/>
        <end position="196"/>
    </location>
</feature>
<feature type="repeat" description="1">
    <location>
        <begin position="208"/>
        <end position="209"/>
    </location>
</feature>
<feature type="repeat" description="2">
    <location>
        <begin position="210"/>
        <end position="211"/>
    </location>
</feature>
<feature type="repeat" description="3">
    <location>
        <begin position="212"/>
        <end position="213"/>
    </location>
</feature>
<feature type="repeat" description="4">
    <location>
        <begin position="214"/>
        <end position="215"/>
    </location>
</feature>
<feature type="domain" description="OmpA-like" evidence="1">
    <location>
        <begin position="217"/>
        <end position="345"/>
    </location>
</feature>
<feature type="region of interest" description="4 X 2 AA approximate tandem repeats of A-P">
    <location>
        <begin position="208"/>
        <end position="215"/>
    </location>
</feature>
<feature type="site" description="Part of salt bridge gating mechanism" evidence="1">
    <location>
        <position position="74"/>
    </location>
</feature>
<feature type="site" description="Part of salt bridge gating mechanism" evidence="1">
    <location>
        <position position="165"/>
    </location>
</feature>
<feature type="disulfide bond" evidence="1">
    <location>
        <begin position="318"/>
        <end position="330"/>
    </location>
</feature>
<feature type="sequence conflict" description="In Ref. 2; AA sequence." evidence="3" ref="2">
    <original>G</original>
    <variation>P</variation>
    <location>
        <position position="35"/>
    </location>
</feature>
<feature type="sequence conflict" description="In Ref. 2; AA sequence." evidence="3" ref="2">
    <original>TGSI</original>
    <variation>DPW</variation>
    <location>
        <begin position="42"/>
        <end position="45"/>
    </location>
</feature>
<feature type="sequence conflict" description="In Ref. 2; AA sequence." evidence="3" ref="2">
    <original>D</original>
    <variation>K</variation>
    <location>
        <position position="49"/>
    </location>
</feature>